<name>RK32_GOSHI</name>
<reference key="1">
    <citation type="journal article" date="2006" name="BMC Genomics">
        <title>The complete chloroplast genome sequence of Gossypium hirsutum: organization and phylogenetic relationships to other angiosperms.</title>
        <authorList>
            <person name="Lee S.-B."/>
            <person name="Kaittanis C."/>
            <person name="Jansen R.K."/>
            <person name="Hostetler J.B."/>
            <person name="Tallon L.J."/>
            <person name="Town C.D."/>
            <person name="Daniell H."/>
        </authorList>
    </citation>
    <scope>NUCLEOTIDE SEQUENCE [LARGE SCALE GENOMIC DNA]</scope>
    <source>
        <strain>cv. Coker 310FR</strain>
    </source>
</reference>
<accession>Q2L961</accession>
<dbReference type="EMBL" id="DQ345959">
    <property type="protein sequence ID" value="ABC73684.1"/>
    <property type="molecule type" value="Genomic_DNA"/>
</dbReference>
<dbReference type="RefSeq" id="YP_538992.1">
    <property type="nucleotide sequence ID" value="NC_007944.1"/>
</dbReference>
<dbReference type="SMR" id="Q2L961"/>
<dbReference type="GeneID" id="3989244"/>
<dbReference type="KEGG" id="ghi:3989244"/>
<dbReference type="Proteomes" id="UP000189702">
    <property type="component" value="Chloroplast Pltd"/>
</dbReference>
<dbReference type="GO" id="GO:0009507">
    <property type="term" value="C:chloroplast"/>
    <property type="evidence" value="ECO:0007669"/>
    <property type="project" value="UniProtKB-SubCell"/>
</dbReference>
<dbReference type="GO" id="GO:0015934">
    <property type="term" value="C:large ribosomal subunit"/>
    <property type="evidence" value="ECO:0007669"/>
    <property type="project" value="InterPro"/>
</dbReference>
<dbReference type="GO" id="GO:0003735">
    <property type="term" value="F:structural constituent of ribosome"/>
    <property type="evidence" value="ECO:0007669"/>
    <property type="project" value="InterPro"/>
</dbReference>
<dbReference type="GO" id="GO:0006412">
    <property type="term" value="P:translation"/>
    <property type="evidence" value="ECO:0007669"/>
    <property type="project" value="UniProtKB-UniRule"/>
</dbReference>
<dbReference type="HAMAP" id="MF_00340">
    <property type="entry name" value="Ribosomal_bL32"/>
    <property type="match status" value="1"/>
</dbReference>
<dbReference type="InterPro" id="IPR002677">
    <property type="entry name" value="Ribosomal_bL32"/>
</dbReference>
<dbReference type="InterPro" id="IPR044958">
    <property type="entry name" value="Ribosomal_bL32_plant/cyanobact"/>
</dbReference>
<dbReference type="InterPro" id="IPR011332">
    <property type="entry name" value="Ribosomal_zn-bd"/>
</dbReference>
<dbReference type="PANTHER" id="PTHR36083">
    <property type="entry name" value="50S RIBOSOMAL PROTEIN L32, CHLOROPLASTIC"/>
    <property type="match status" value="1"/>
</dbReference>
<dbReference type="PANTHER" id="PTHR36083:SF1">
    <property type="entry name" value="LARGE RIBOSOMAL SUBUNIT PROTEIN BL32C"/>
    <property type="match status" value="1"/>
</dbReference>
<dbReference type="Pfam" id="PF01783">
    <property type="entry name" value="Ribosomal_L32p"/>
    <property type="match status" value="1"/>
</dbReference>
<dbReference type="SUPFAM" id="SSF57829">
    <property type="entry name" value="Zn-binding ribosomal proteins"/>
    <property type="match status" value="1"/>
</dbReference>
<evidence type="ECO:0000255" key="1">
    <source>
        <dbReference type="HAMAP-Rule" id="MF_00340"/>
    </source>
</evidence>
<evidence type="ECO:0000305" key="2"/>
<sequence length="54" mass="6216">MAVPKKRTSTSKKRIRKNVWKKKGYWAALKAFSLAKSLSTGNSKSFFVRQINLE</sequence>
<feature type="chain" id="PRO_0000276471" description="Large ribosomal subunit protein bL32c">
    <location>
        <begin position="1"/>
        <end position="54"/>
    </location>
</feature>
<gene>
    <name evidence="1" type="primary">rpl32</name>
</gene>
<proteinExistence type="inferred from homology"/>
<keyword id="KW-0150">Chloroplast</keyword>
<keyword id="KW-0934">Plastid</keyword>
<keyword id="KW-1185">Reference proteome</keyword>
<keyword id="KW-0687">Ribonucleoprotein</keyword>
<keyword id="KW-0689">Ribosomal protein</keyword>
<organism>
    <name type="scientific">Gossypium hirsutum</name>
    <name type="common">Upland cotton</name>
    <name type="synonym">Gossypium mexicanum</name>
    <dbReference type="NCBI Taxonomy" id="3635"/>
    <lineage>
        <taxon>Eukaryota</taxon>
        <taxon>Viridiplantae</taxon>
        <taxon>Streptophyta</taxon>
        <taxon>Embryophyta</taxon>
        <taxon>Tracheophyta</taxon>
        <taxon>Spermatophyta</taxon>
        <taxon>Magnoliopsida</taxon>
        <taxon>eudicotyledons</taxon>
        <taxon>Gunneridae</taxon>
        <taxon>Pentapetalae</taxon>
        <taxon>rosids</taxon>
        <taxon>malvids</taxon>
        <taxon>Malvales</taxon>
        <taxon>Malvaceae</taxon>
        <taxon>Malvoideae</taxon>
        <taxon>Gossypium</taxon>
    </lineage>
</organism>
<geneLocation type="chloroplast"/>
<comment type="subcellular location">
    <subcellularLocation>
        <location>Plastid</location>
        <location>Chloroplast</location>
    </subcellularLocation>
</comment>
<comment type="similarity">
    <text evidence="1">Belongs to the bacterial ribosomal protein bL32 family.</text>
</comment>
<protein>
    <recommendedName>
        <fullName evidence="1">Large ribosomal subunit protein bL32c</fullName>
    </recommendedName>
    <alternativeName>
        <fullName evidence="2">50S ribosomal protein L32, chloroplastic</fullName>
    </alternativeName>
</protein>